<protein>
    <recommendedName>
        <fullName evidence="1">Large ribosomal subunit protein bL20</fullName>
    </recommendedName>
    <alternativeName>
        <fullName evidence="2">50S ribosomal protein L20</fullName>
    </alternativeName>
</protein>
<feature type="chain" id="PRO_0000243684" description="Large ribosomal subunit protein bL20">
    <location>
        <begin position="1"/>
        <end position="119"/>
    </location>
</feature>
<proteinExistence type="inferred from homology"/>
<dbReference type="EMBL" id="BA000043">
    <property type="protein sequence ID" value="BAD77001.1"/>
    <property type="molecule type" value="Genomic_DNA"/>
</dbReference>
<dbReference type="RefSeq" id="WP_011232190.1">
    <property type="nucleotide sequence ID" value="NC_006510.1"/>
</dbReference>
<dbReference type="SMR" id="Q5KWD5"/>
<dbReference type="STRING" id="235909.GK2716"/>
<dbReference type="GeneID" id="89612079"/>
<dbReference type="KEGG" id="gka:GK2716"/>
<dbReference type="eggNOG" id="COG0292">
    <property type="taxonomic scope" value="Bacteria"/>
</dbReference>
<dbReference type="HOGENOM" id="CLU_123265_0_1_9"/>
<dbReference type="Proteomes" id="UP000001172">
    <property type="component" value="Chromosome"/>
</dbReference>
<dbReference type="GO" id="GO:1990904">
    <property type="term" value="C:ribonucleoprotein complex"/>
    <property type="evidence" value="ECO:0007669"/>
    <property type="project" value="UniProtKB-KW"/>
</dbReference>
<dbReference type="GO" id="GO:0005840">
    <property type="term" value="C:ribosome"/>
    <property type="evidence" value="ECO:0007669"/>
    <property type="project" value="UniProtKB-KW"/>
</dbReference>
<dbReference type="GO" id="GO:0019843">
    <property type="term" value="F:rRNA binding"/>
    <property type="evidence" value="ECO:0007669"/>
    <property type="project" value="UniProtKB-UniRule"/>
</dbReference>
<dbReference type="GO" id="GO:0003735">
    <property type="term" value="F:structural constituent of ribosome"/>
    <property type="evidence" value="ECO:0007669"/>
    <property type="project" value="InterPro"/>
</dbReference>
<dbReference type="GO" id="GO:0000027">
    <property type="term" value="P:ribosomal large subunit assembly"/>
    <property type="evidence" value="ECO:0007669"/>
    <property type="project" value="UniProtKB-UniRule"/>
</dbReference>
<dbReference type="GO" id="GO:0006412">
    <property type="term" value="P:translation"/>
    <property type="evidence" value="ECO:0007669"/>
    <property type="project" value="InterPro"/>
</dbReference>
<dbReference type="CDD" id="cd07026">
    <property type="entry name" value="Ribosomal_L20"/>
    <property type="match status" value="1"/>
</dbReference>
<dbReference type="FunFam" id="1.10.1900.20:FF:000001">
    <property type="entry name" value="50S ribosomal protein L20"/>
    <property type="match status" value="1"/>
</dbReference>
<dbReference type="Gene3D" id="6.10.160.10">
    <property type="match status" value="1"/>
</dbReference>
<dbReference type="Gene3D" id="1.10.1900.20">
    <property type="entry name" value="Ribosomal protein L20"/>
    <property type="match status" value="1"/>
</dbReference>
<dbReference type="HAMAP" id="MF_00382">
    <property type="entry name" value="Ribosomal_bL20"/>
    <property type="match status" value="1"/>
</dbReference>
<dbReference type="InterPro" id="IPR005813">
    <property type="entry name" value="Ribosomal_bL20"/>
</dbReference>
<dbReference type="InterPro" id="IPR049946">
    <property type="entry name" value="RIBOSOMAL_L20_CS"/>
</dbReference>
<dbReference type="InterPro" id="IPR035566">
    <property type="entry name" value="Ribosomal_protein_bL20_C"/>
</dbReference>
<dbReference type="NCBIfam" id="TIGR01032">
    <property type="entry name" value="rplT_bact"/>
    <property type="match status" value="1"/>
</dbReference>
<dbReference type="PANTHER" id="PTHR10986">
    <property type="entry name" value="39S RIBOSOMAL PROTEIN L20"/>
    <property type="match status" value="1"/>
</dbReference>
<dbReference type="Pfam" id="PF00453">
    <property type="entry name" value="Ribosomal_L20"/>
    <property type="match status" value="1"/>
</dbReference>
<dbReference type="PRINTS" id="PR00062">
    <property type="entry name" value="RIBOSOMALL20"/>
</dbReference>
<dbReference type="SUPFAM" id="SSF74731">
    <property type="entry name" value="Ribosomal protein L20"/>
    <property type="match status" value="1"/>
</dbReference>
<dbReference type="PROSITE" id="PS00937">
    <property type="entry name" value="RIBOSOMAL_L20"/>
    <property type="match status" value="1"/>
</dbReference>
<reference key="1">
    <citation type="journal article" date="2004" name="Nucleic Acids Res.">
        <title>Thermoadaptation trait revealed by the genome sequence of thermophilic Geobacillus kaustophilus.</title>
        <authorList>
            <person name="Takami H."/>
            <person name="Takaki Y."/>
            <person name="Chee G.-J."/>
            <person name="Nishi S."/>
            <person name="Shimamura S."/>
            <person name="Suzuki H."/>
            <person name="Matsui S."/>
            <person name="Uchiyama I."/>
        </authorList>
    </citation>
    <scope>NUCLEOTIDE SEQUENCE [LARGE SCALE GENOMIC DNA]</scope>
    <source>
        <strain>HTA426</strain>
    </source>
</reference>
<comment type="function">
    <text evidence="1">Binds directly to 23S ribosomal RNA and is necessary for the in vitro assembly process of the 50S ribosomal subunit. It is not involved in the protein synthesizing functions of that subunit.</text>
</comment>
<comment type="similarity">
    <text evidence="1">Belongs to the bacterial ribosomal protein bL20 family.</text>
</comment>
<evidence type="ECO:0000255" key="1">
    <source>
        <dbReference type="HAMAP-Rule" id="MF_00382"/>
    </source>
</evidence>
<evidence type="ECO:0000305" key="2"/>
<gene>
    <name evidence="1" type="primary">rplT</name>
    <name type="ordered locus">GK2716</name>
</gene>
<keyword id="KW-1185">Reference proteome</keyword>
<keyword id="KW-0687">Ribonucleoprotein</keyword>
<keyword id="KW-0689">Ribosomal protein</keyword>
<keyword id="KW-0694">RNA-binding</keyword>
<keyword id="KW-0699">rRNA-binding</keyword>
<organism>
    <name type="scientific">Geobacillus kaustophilus (strain HTA426)</name>
    <dbReference type="NCBI Taxonomy" id="235909"/>
    <lineage>
        <taxon>Bacteria</taxon>
        <taxon>Bacillati</taxon>
        <taxon>Bacillota</taxon>
        <taxon>Bacilli</taxon>
        <taxon>Bacillales</taxon>
        <taxon>Anoxybacillaceae</taxon>
        <taxon>Geobacillus</taxon>
        <taxon>Geobacillus thermoleovorans group</taxon>
    </lineage>
</organism>
<accession>Q5KWD5</accession>
<sequence>MPRVKGGPVTRRRRKKVLKLAKGYFGAKHALYRVANQQVMKSLMYAYRDRRQRKRDFRKLWIVRINAAARQNGLSYSRLMHGLKLAGVEVNRKMLADLAVNDQAAFAQLADLAKANLNK</sequence>
<name>RL20_GEOKA</name>